<keyword id="KW-0378">Hydrolase</keyword>
<keyword id="KW-0964">Secreted</keyword>
<keyword id="KW-0719">Serine esterase</keyword>
<gene>
    <name type="primary">est</name>
</gene>
<accession>P18773</accession>
<comment type="subcellular location">
    <subcellularLocation>
        <location evidence="4">Secreted</location>
    </subcellularLocation>
    <text>External to the cytoplasmic membrane.</text>
</comment>
<comment type="miscellaneous">
    <text>Acinetobacter lwoffii RAG-1 has the ability to grow on simple triglycerides such as triacetin; mutants defective in esterase lose this ability, but retain the ability to grow on acetate.</text>
</comment>
<comment type="similarity">
    <text evidence="4">Belongs to the 'GDXG' lipolytic enzyme family.</text>
</comment>
<proteinExistence type="inferred from homology"/>
<dbReference type="EC" id="3.1.1.-"/>
<dbReference type="EMBL" id="M24890">
    <property type="protein sequence ID" value="AAA02895.1"/>
    <property type="molecule type" value="Genomic_DNA"/>
</dbReference>
<dbReference type="PIR" id="JS0202">
    <property type="entry name" value="JS0202"/>
</dbReference>
<dbReference type="SMR" id="P18773"/>
<dbReference type="ESTHER" id="acica-este1">
    <property type="family name" value="Hormone-sensitive_lipase_like"/>
</dbReference>
<dbReference type="GO" id="GO:0005576">
    <property type="term" value="C:extracellular region"/>
    <property type="evidence" value="ECO:0007669"/>
    <property type="project" value="UniProtKB-SubCell"/>
</dbReference>
<dbReference type="GO" id="GO:0052689">
    <property type="term" value="F:carboxylic ester hydrolase activity"/>
    <property type="evidence" value="ECO:0007669"/>
    <property type="project" value="UniProtKB-KW"/>
</dbReference>
<dbReference type="Gene3D" id="3.40.50.1820">
    <property type="entry name" value="alpha/beta hydrolase"/>
    <property type="match status" value="1"/>
</dbReference>
<dbReference type="InterPro" id="IPR013094">
    <property type="entry name" value="AB_hydrolase_3"/>
</dbReference>
<dbReference type="InterPro" id="IPR029058">
    <property type="entry name" value="AB_hydrolase_fold"/>
</dbReference>
<dbReference type="InterPro" id="IPR050300">
    <property type="entry name" value="GDXG_lipolytic_enzyme"/>
</dbReference>
<dbReference type="InterPro" id="IPR002168">
    <property type="entry name" value="Lipase_GDXG_HIS_AS"/>
</dbReference>
<dbReference type="InterPro" id="IPR033140">
    <property type="entry name" value="Lipase_GDXG_put_SER_AS"/>
</dbReference>
<dbReference type="PANTHER" id="PTHR48081">
    <property type="entry name" value="AB HYDROLASE SUPERFAMILY PROTEIN C4A8.06C"/>
    <property type="match status" value="1"/>
</dbReference>
<dbReference type="PANTHER" id="PTHR48081:SF8">
    <property type="entry name" value="ALPHA_BETA HYDROLASE FOLD-3 DOMAIN-CONTAINING PROTEIN-RELATED"/>
    <property type="match status" value="1"/>
</dbReference>
<dbReference type="Pfam" id="PF07859">
    <property type="entry name" value="Abhydrolase_3"/>
    <property type="match status" value="1"/>
</dbReference>
<dbReference type="SUPFAM" id="SSF53474">
    <property type="entry name" value="alpha/beta-Hydrolases"/>
    <property type="match status" value="1"/>
</dbReference>
<dbReference type="PROSITE" id="PS01173">
    <property type="entry name" value="LIPASE_GDXG_HIS"/>
    <property type="match status" value="1"/>
</dbReference>
<dbReference type="PROSITE" id="PS01174">
    <property type="entry name" value="LIPASE_GDXG_SER"/>
    <property type="match status" value="1"/>
</dbReference>
<protein>
    <recommendedName>
        <fullName>Esterase</fullName>
        <ecNumber>3.1.1.-</ecNumber>
    </recommendedName>
</protein>
<sequence length="303" mass="33911">MKFGTVWKYYFTESLLKATIRTPSQLNLAPNALRPVLDQLCRLFPQNPTVQIRPIRLAGVRGEEIKAQASATQLIFHIHGGAFFLGSLNTHRALMTDLASRTQMQVIHVDYPLAPEHPYPEAIDAIFDVYQALLVQGIKPKDIIISGDSCGANLALALSLRLKQQPELMPSGLILMSPYLDLTLTSESLRFNQKHDALLSIEALQAGIKHYLTDDIQPGDPRVSPLFDDLDGLPPTLVQVGSKEILLDDSKRFREKAEQADVKVHFKLYTGMWNNFQMFNAWFPEAKQALADIAEFATSLDLD</sequence>
<reference key="1">
    <citation type="journal article" date="1989" name="Gene">
        <title>Cloning and expression in Escherichia coli of an esterase-coding gene from the oil-degrading bacterium Acinetobacter calcoaceticus RAG-1.</title>
        <authorList>
            <person name="Reddy P.G."/>
            <person name="Allon R."/>
            <person name="Mevarech M."/>
            <person name="Mendelovitz S."/>
            <person name="Sato Y."/>
            <person name="Gutnick D.L."/>
        </authorList>
    </citation>
    <scope>NUCLEOTIDE SEQUENCE [GENOMIC DNA]</scope>
    <source>
        <strain>ATCC 31012 / DSM 23050 / BCRC 14357 / CCUG 45561 / CIP 110063 / KCTC 2702 / LMG 19082 / RAG-1</strain>
    </source>
</reference>
<reference key="2">
    <citation type="submission" date="1993-07" db="EMBL/GenBank/DDBJ databases">
        <authorList>
            <person name="Gutnick D.L."/>
        </authorList>
    </citation>
    <scope>SEQUENCE REVISION</scope>
</reference>
<feature type="chain" id="PRO_0000071554" description="Esterase">
    <location>
        <begin position="1"/>
        <end position="303"/>
    </location>
</feature>
<feature type="short sequence motif" description="Involved in the stabilization of the negatively charged intermediate by the formation of the oxyanion hole" evidence="2">
    <location>
        <begin position="79"/>
        <end position="81"/>
    </location>
</feature>
<feature type="active site" evidence="1 3">
    <location>
        <position position="149"/>
    </location>
</feature>
<feature type="active site" evidence="1">
    <location>
        <position position="244"/>
    </location>
</feature>
<name>EST_ACIVR</name>
<organism>
    <name type="scientific">Acinetobacter venetianus (strain ATCC 31012 / DSM 23050 / BCRC 14357 / CCUG 45561 / CIP 110063 / KCTC 2702 / LMG 19082 / RAG-1)</name>
    <dbReference type="NCBI Taxonomy" id="1191460"/>
    <lineage>
        <taxon>Bacteria</taxon>
        <taxon>Pseudomonadati</taxon>
        <taxon>Pseudomonadota</taxon>
        <taxon>Gammaproteobacteria</taxon>
        <taxon>Moraxellales</taxon>
        <taxon>Moraxellaceae</taxon>
        <taxon>Acinetobacter</taxon>
    </lineage>
</organism>
<evidence type="ECO:0000250" key="1">
    <source>
        <dbReference type="UniProtKB" id="O06350"/>
    </source>
</evidence>
<evidence type="ECO:0000250" key="2">
    <source>
        <dbReference type="UniProtKB" id="Q5NUF3"/>
    </source>
</evidence>
<evidence type="ECO:0000255" key="3">
    <source>
        <dbReference type="PROSITE-ProRule" id="PRU10038"/>
    </source>
</evidence>
<evidence type="ECO:0000305" key="4"/>